<gene>
    <name type="ordered locus">Syncc9902_1151</name>
</gene>
<name>Y1151_SYNS9</name>
<proteinExistence type="inferred from homology"/>
<dbReference type="EMBL" id="CP000097">
    <property type="protein sequence ID" value="ABB26115.1"/>
    <property type="molecule type" value="Genomic_DNA"/>
</dbReference>
<dbReference type="RefSeq" id="WP_011359942.1">
    <property type="nucleotide sequence ID" value="NC_007513.1"/>
</dbReference>
<dbReference type="STRING" id="316279.Syncc9902_1151"/>
<dbReference type="KEGG" id="sye:Syncc9902_1151"/>
<dbReference type="eggNOG" id="COG1615">
    <property type="taxonomic scope" value="Bacteria"/>
</dbReference>
<dbReference type="HOGENOM" id="CLU_007733_0_0_3"/>
<dbReference type="OrthoDB" id="9763654at2"/>
<dbReference type="Proteomes" id="UP000002712">
    <property type="component" value="Chromosome"/>
</dbReference>
<dbReference type="GO" id="GO:0005576">
    <property type="term" value="C:extracellular region"/>
    <property type="evidence" value="ECO:0007669"/>
    <property type="project" value="TreeGrafter"/>
</dbReference>
<dbReference type="GO" id="GO:0005886">
    <property type="term" value="C:plasma membrane"/>
    <property type="evidence" value="ECO:0007669"/>
    <property type="project" value="UniProtKB-SubCell"/>
</dbReference>
<dbReference type="HAMAP" id="MF_01600">
    <property type="entry name" value="UPF0182"/>
    <property type="match status" value="1"/>
</dbReference>
<dbReference type="InterPro" id="IPR005372">
    <property type="entry name" value="UPF0182"/>
</dbReference>
<dbReference type="PANTHER" id="PTHR39344">
    <property type="entry name" value="UPF0182 PROTEIN SLL1060"/>
    <property type="match status" value="1"/>
</dbReference>
<dbReference type="PANTHER" id="PTHR39344:SF1">
    <property type="entry name" value="UPF0182 PROTEIN SLL1060"/>
    <property type="match status" value="1"/>
</dbReference>
<dbReference type="Pfam" id="PF03699">
    <property type="entry name" value="UPF0182"/>
    <property type="match status" value="1"/>
</dbReference>
<organism>
    <name type="scientific">Synechococcus sp. (strain CC9902)</name>
    <dbReference type="NCBI Taxonomy" id="316279"/>
    <lineage>
        <taxon>Bacteria</taxon>
        <taxon>Bacillati</taxon>
        <taxon>Cyanobacteriota</taxon>
        <taxon>Cyanophyceae</taxon>
        <taxon>Synechococcales</taxon>
        <taxon>Synechococcaceae</taxon>
        <taxon>Synechococcus</taxon>
    </lineage>
</organism>
<evidence type="ECO:0000255" key="1">
    <source>
        <dbReference type="HAMAP-Rule" id="MF_01600"/>
    </source>
</evidence>
<sequence>MKRFLWILLPPVLVVVARMHVEWVWFAQFNWQSVLFQRWMLQLLFAGAGSIPVFLAVLWLRAFDRIDDPPRQQKRPIDGMRFSLVLMVSGLAFLACSVVLSDLAILAWKQPFSLSHWQSTGHSMASEWKALLPIQLAIAGVSLCRPQLRRWVAVAMGFALVLVVSRAWGVWSLAWLIPDEGLREPLLGTDLSFGLGRFSAIQLGLELLVLSGTFTTAHAVWGRVTVSPHLSDWSMPALGNRSYRWLSIGVGTNLLGVAGLVWLSRHQLLWHQHGLVAGAGWLQQHLTLPFRSLLAFVLLVLGVSCIVRGIGHLQRLLLLCVAAIVIIESTLTPLTRWLVVRPQELALQAPYLETAIRSTRHGFQLDRIQRRRTEPNVDLTEEDLESGASTLRNVRLWDSGPLLETNRQLQQLRVYYRFSNAAVDRYPLIPDSDTSQQVIISARELDQSALPRRSKTWQNRHFVFTHGNGFTVSPVNTRGTDGLPSYVISDLGSNTRIEGNRDLGIKRKDVEAAIPAQNAALYFGMLPSPYAVVPTEVDEFDYPDGDLNVYSHYAGSAGVPIGSLIQRLCASIYLAEPRLLTTKAIQKDSRVLLRREVRQRIRAIAPFLDLRGDPYLVSVPGDNLELGTSGNRIQHQFWIAEGYTHSATYAYSAAVSKTDSDRYLRNSVKVVVDAYNGSMRLFVSEPDDPIIKSWQKLFPQLFESIESMPNILKAHLLVPEDFFKVQVSQLQRYHVEDPRIFYSGDDVWQVPLEVYGGEQISVEPYHITAQIEGNNSSEFLLLQPLTPLARPNLTAWLAARNDAEHYGELLLIDFPKDRPILGPEQIQALINQDPEVSKVFSLWDGGGSELVQGNLLVLPVGTSLLYVEPVYLKATKGGLPSLVRIVVSDGRGIAMDVNLSAAIDRLIKKTPYGITEGVSTDRLDESRKRSIS</sequence>
<protein>
    <recommendedName>
        <fullName evidence="1">UPF0182 protein Syncc9902_1151</fullName>
    </recommendedName>
</protein>
<reference key="1">
    <citation type="submission" date="2005-08" db="EMBL/GenBank/DDBJ databases">
        <title>Complete sequence of Synechococcus sp. CC9902.</title>
        <authorList>
            <person name="Copeland A."/>
            <person name="Lucas S."/>
            <person name="Lapidus A."/>
            <person name="Barry K."/>
            <person name="Detter J.C."/>
            <person name="Glavina T."/>
            <person name="Hammon N."/>
            <person name="Israni S."/>
            <person name="Pitluck S."/>
            <person name="Martinez M."/>
            <person name="Schmutz J."/>
            <person name="Larimer F."/>
            <person name="Land M."/>
            <person name="Kyrpides N."/>
            <person name="Ivanova N."/>
            <person name="Richardson P."/>
        </authorList>
    </citation>
    <scope>NUCLEOTIDE SEQUENCE [LARGE SCALE GENOMIC DNA]</scope>
    <source>
        <strain>CC9902</strain>
    </source>
</reference>
<comment type="subcellular location">
    <subcellularLocation>
        <location evidence="1">Cell membrane</location>
        <topology evidence="1">Multi-pass membrane protein</topology>
    </subcellularLocation>
</comment>
<comment type="similarity">
    <text evidence="1">Belongs to the UPF0182 family.</text>
</comment>
<feature type="chain" id="PRO_0000291297" description="UPF0182 protein Syncc9902_1151">
    <location>
        <begin position="1"/>
        <end position="932"/>
    </location>
</feature>
<feature type="transmembrane region" description="Helical" evidence="1">
    <location>
        <begin position="4"/>
        <end position="24"/>
    </location>
</feature>
<feature type="transmembrane region" description="Helical" evidence="1">
    <location>
        <begin position="40"/>
        <end position="60"/>
    </location>
</feature>
<feature type="transmembrane region" description="Helical" evidence="1">
    <location>
        <begin position="85"/>
        <end position="105"/>
    </location>
</feature>
<feature type="transmembrane region" description="Helical" evidence="1">
    <location>
        <begin position="124"/>
        <end position="144"/>
    </location>
</feature>
<feature type="transmembrane region" description="Helical" evidence="1">
    <location>
        <begin position="151"/>
        <end position="171"/>
    </location>
</feature>
<feature type="transmembrane region" description="Helical" evidence="1">
    <location>
        <begin position="201"/>
        <end position="221"/>
    </location>
</feature>
<feature type="transmembrane region" description="Helical" evidence="1">
    <location>
        <begin position="243"/>
        <end position="263"/>
    </location>
</feature>
<feature type="transmembrane region" description="Helical" evidence="1">
    <location>
        <begin position="293"/>
        <end position="313"/>
    </location>
</feature>
<feature type="transmembrane region" description="Helical" evidence="1">
    <location>
        <begin position="315"/>
        <end position="335"/>
    </location>
</feature>
<accession>Q3AXS1</accession>
<keyword id="KW-1003">Cell membrane</keyword>
<keyword id="KW-0472">Membrane</keyword>
<keyword id="KW-1185">Reference proteome</keyword>
<keyword id="KW-0812">Transmembrane</keyword>
<keyword id="KW-1133">Transmembrane helix</keyword>